<protein>
    <recommendedName>
        <fullName evidence="12">ATP-dependent Clp protease proteolytic subunit 5, chloroplastic</fullName>
        <ecNumber>3.4.21.92</ecNumber>
    </recommendedName>
    <alternativeName>
        <fullName evidence="12">Endopeptidase ClpP5</fullName>
        <shortName>nClpP5</shortName>
    </alternativeName>
    <alternativeName>
        <fullName>nClpP1</fullName>
    </alternativeName>
</protein>
<evidence type="ECO:0000250" key="1"/>
<evidence type="ECO:0000269" key="2">
    <source>
    </source>
</evidence>
<evidence type="ECO:0000269" key="3">
    <source>
    </source>
</evidence>
<evidence type="ECO:0000269" key="4">
    <source>
    </source>
</evidence>
<evidence type="ECO:0000269" key="5">
    <source>
    </source>
</evidence>
<evidence type="ECO:0000269" key="6">
    <source>
    </source>
</evidence>
<evidence type="ECO:0000269" key="7">
    <source>
    </source>
</evidence>
<evidence type="ECO:0000269" key="8">
    <source>
    </source>
</evidence>
<evidence type="ECO:0000269" key="9">
    <source>
    </source>
</evidence>
<evidence type="ECO:0000269" key="10">
    <source>
    </source>
</evidence>
<evidence type="ECO:0000269" key="11">
    <source ref="5"/>
</evidence>
<evidence type="ECO:0000303" key="12">
    <source>
    </source>
</evidence>
<evidence type="ECO:0000305" key="13"/>
<evidence type="ECO:0000312" key="14">
    <source>
        <dbReference type="Araport" id="AT1G02560"/>
    </source>
</evidence>
<evidence type="ECO:0000312" key="15">
    <source>
        <dbReference type="EMBL" id="AAG10637.1"/>
    </source>
</evidence>
<evidence type="ECO:0007744" key="16">
    <source>
    </source>
</evidence>
<gene>
    <name evidence="12" type="primary">CLPP5</name>
    <name type="synonym">NCLPP1</name>
    <name type="synonym">NCLPP5</name>
    <name evidence="14" type="ordered locus">At1g02560</name>
    <name evidence="15" type="ORF">T14P4.12</name>
</gene>
<keyword id="KW-0007">Acetylation</keyword>
<keyword id="KW-0150">Chloroplast</keyword>
<keyword id="KW-0903">Direct protein sequencing</keyword>
<keyword id="KW-0378">Hydrolase</keyword>
<keyword id="KW-0934">Plastid</keyword>
<keyword id="KW-0645">Protease</keyword>
<keyword id="KW-1185">Reference proteome</keyword>
<keyword id="KW-0720">Serine protease</keyword>
<keyword id="KW-0809">Transit peptide</keyword>
<keyword id="KW-0832">Ubl conjugation</keyword>
<organism>
    <name type="scientific">Arabidopsis thaliana</name>
    <name type="common">Mouse-ear cress</name>
    <dbReference type="NCBI Taxonomy" id="3702"/>
    <lineage>
        <taxon>Eukaryota</taxon>
        <taxon>Viridiplantae</taxon>
        <taxon>Streptophyta</taxon>
        <taxon>Embryophyta</taxon>
        <taxon>Tracheophyta</taxon>
        <taxon>Spermatophyta</taxon>
        <taxon>Magnoliopsida</taxon>
        <taxon>eudicotyledons</taxon>
        <taxon>Gunneridae</taxon>
        <taxon>Pentapetalae</taxon>
        <taxon>rosids</taxon>
        <taxon>malvids</taxon>
        <taxon>Brassicales</taxon>
        <taxon>Brassicaceae</taxon>
        <taxon>Camelineae</taxon>
        <taxon>Arabidopsis</taxon>
    </lineage>
</organism>
<sequence>MAHACVSTSASSLRFTAGFVSASPNGSSFDSPKLSLPFEPLRSRKTNKLVSDRKNWKNSTPKAVYSGNLWTPEIPSPQGVWSIRDDLQVPSSPYFPAYAQGQGPPPMVQERFQSIISQLFQYRIIRCGGAVDDDMANIIVAQLLYLDAVDPTKDIVMYVNSPGGSVTAGMAIFDTMRHIRPDVSTVCVGLAASMGAFLLSAGTKGKRYSLPNSRIMIHQPLGGAQGGQTDIDIQANEMLHHKANLNGYLAYHTGQSLEKINQDTDRDFFMSAKEAKEYGLIDGVIMNPLKALQPLAAA</sequence>
<name>CLPP5_ARATH</name>
<accession>Q9S834</accession>
<reference key="1">
    <citation type="journal article" date="1999" name="Plant Cell Physiol.">
        <title>Identification of clp genes expressed in senescing Arabidopsis leaves.</title>
        <authorList>
            <person name="Nakabayashi K."/>
            <person name="Ito M."/>
            <person name="Kiyosue T."/>
            <person name="Shinozaki K."/>
            <person name="Watanabe A."/>
        </authorList>
    </citation>
    <scope>NUCLEOTIDE SEQUENCE [MRNA]</scope>
    <scope>INDUCTION</scope>
    <source>
        <strain>cv. Columbia</strain>
    </source>
</reference>
<reference key="2">
    <citation type="journal article" date="2002" name="Physiol. Plantarum">
        <title>Characterization of chloroplast Clp proteins in Arabidopsis: localization, tissue specificity and stress responses.</title>
        <authorList>
            <person name="Zheng B."/>
            <person name="Halperin T."/>
            <person name="Hruskova-Heidingsfeldova O."/>
            <person name="Adam Z."/>
            <person name="Clarke A.K."/>
        </authorList>
    </citation>
    <scope>NUCLEOTIDE SEQUENCE [MRNA]</scope>
    <scope>TISSUE SPECIFICITY</scope>
    <scope>INDUCTION</scope>
    <scope>SUBCELLULAR LOCATION</scope>
    <source>
        <strain>cv. Columbia</strain>
        <tissue>Hypocotyl</tissue>
    </source>
</reference>
<reference key="3">
    <citation type="journal article" date="2000" name="Nature">
        <title>Sequence and analysis of chromosome 1 of the plant Arabidopsis thaliana.</title>
        <authorList>
            <person name="Theologis A."/>
            <person name="Ecker J.R."/>
            <person name="Palm C.J."/>
            <person name="Federspiel N.A."/>
            <person name="Kaul S."/>
            <person name="White O."/>
            <person name="Alonso J."/>
            <person name="Altafi H."/>
            <person name="Araujo R."/>
            <person name="Bowman C.L."/>
            <person name="Brooks S.Y."/>
            <person name="Buehler E."/>
            <person name="Chan A."/>
            <person name="Chao Q."/>
            <person name="Chen H."/>
            <person name="Cheuk R.F."/>
            <person name="Chin C.W."/>
            <person name="Chung M.K."/>
            <person name="Conn L."/>
            <person name="Conway A.B."/>
            <person name="Conway A.R."/>
            <person name="Creasy T.H."/>
            <person name="Dewar K."/>
            <person name="Dunn P."/>
            <person name="Etgu P."/>
            <person name="Feldblyum T.V."/>
            <person name="Feng J.-D."/>
            <person name="Fong B."/>
            <person name="Fujii C.Y."/>
            <person name="Gill J.E."/>
            <person name="Goldsmith A.D."/>
            <person name="Haas B."/>
            <person name="Hansen N.F."/>
            <person name="Hughes B."/>
            <person name="Huizar L."/>
            <person name="Hunter J.L."/>
            <person name="Jenkins J."/>
            <person name="Johnson-Hopson C."/>
            <person name="Khan S."/>
            <person name="Khaykin E."/>
            <person name="Kim C.J."/>
            <person name="Koo H.L."/>
            <person name="Kremenetskaia I."/>
            <person name="Kurtz D.B."/>
            <person name="Kwan A."/>
            <person name="Lam B."/>
            <person name="Langin-Hooper S."/>
            <person name="Lee A."/>
            <person name="Lee J.M."/>
            <person name="Lenz C.A."/>
            <person name="Li J.H."/>
            <person name="Li Y.-P."/>
            <person name="Lin X."/>
            <person name="Liu S.X."/>
            <person name="Liu Z.A."/>
            <person name="Luros J.S."/>
            <person name="Maiti R."/>
            <person name="Marziali A."/>
            <person name="Militscher J."/>
            <person name="Miranda M."/>
            <person name="Nguyen M."/>
            <person name="Nierman W.C."/>
            <person name="Osborne B.I."/>
            <person name="Pai G."/>
            <person name="Peterson J."/>
            <person name="Pham P.K."/>
            <person name="Rizzo M."/>
            <person name="Rooney T."/>
            <person name="Rowley D."/>
            <person name="Sakano H."/>
            <person name="Salzberg S.L."/>
            <person name="Schwartz J.R."/>
            <person name="Shinn P."/>
            <person name="Southwick A.M."/>
            <person name="Sun H."/>
            <person name="Tallon L.J."/>
            <person name="Tambunga G."/>
            <person name="Toriumi M.J."/>
            <person name="Town C.D."/>
            <person name="Utterback T."/>
            <person name="Van Aken S."/>
            <person name="Vaysberg M."/>
            <person name="Vysotskaia V.S."/>
            <person name="Walker M."/>
            <person name="Wu D."/>
            <person name="Yu G."/>
            <person name="Fraser C.M."/>
            <person name="Venter J.C."/>
            <person name="Davis R.W."/>
        </authorList>
    </citation>
    <scope>NUCLEOTIDE SEQUENCE [LARGE SCALE GENOMIC DNA]</scope>
    <source>
        <strain>cv. Columbia</strain>
    </source>
</reference>
<reference key="4">
    <citation type="journal article" date="2017" name="Plant J.">
        <title>Araport11: a complete reannotation of the Arabidopsis thaliana reference genome.</title>
        <authorList>
            <person name="Cheng C.Y."/>
            <person name="Krishnakumar V."/>
            <person name="Chan A.P."/>
            <person name="Thibaud-Nissen F."/>
            <person name="Schobel S."/>
            <person name="Town C.D."/>
        </authorList>
    </citation>
    <scope>GENOME REANNOTATION</scope>
    <source>
        <strain>cv. Columbia</strain>
    </source>
</reference>
<reference key="5">
    <citation type="submission" date="2006-03" db="EMBL/GenBank/DDBJ databases">
        <title>Arabidopsis ORF clones.</title>
        <authorList>
            <person name="Kim C.J."/>
            <person name="Chen H."/>
            <person name="Shinn P."/>
            <person name="Ecker J.R."/>
        </authorList>
    </citation>
    <scope>NUCLEOTIDE SEQUENCE [LARGE SCALE MRNA]</scope>
    <source>
        <strain>cv. Columbia</strain>
    </source>
</reference>
<reference key="6">
    <citation type="submission" date="2002-03" db="EMBL/GenBank/DDBJ databases">
        <title>Full-length cDNA from Arabidopsis thaliana.</title>
        <authorList>
            <person name="Brover V.V."/>
            <person name="Troukhan M.E."/>
            <person name="Alexandrov N.A."/>
            <person name="Lu Y.-P."/>
            <person name="Flavell R.B."/>
            <person name="Feldmann K.A."/>
        </authorList>
    </citation>
    <scope>NUCLEOTIDE SEQUENCE [LARGE SCALE MRNA]</scope>
</reference>
<reference key="7">
    <citation type="journal article" date="2001" name="J. Biol. Chem.">
        <title>Identification of a 350-kDa ClpP protease complex with 10 different Clp isoforms in chloroplasts of Arabidopsis thaliana.</title>
        <authorList>
            <person name="Peltier J.-B."/>
            <person name="Ytterberg J."/>
            <person name="Liberles D.A."/>
            <person name="Roepstorff P."/>
            <person name="van Wijk K.J."/>
        </authorList>
    </citation>
    <scope>PROTEIN SEQUENCE OF 112-123; 243-273 AND 277-290</scope>
    <scope>SUBUNIT</scope>
    <scope>IDENTIFICATION BY MASS SPECTROMETRY</scope>
</reference>
<reference key="8">
    <citation type="journal article" date="2001" name="Plant Physiol.">
        <title>Chloroplast and mitochondrial proteases in Arabidopsis. A proposed nomenclature.</title>
        <authorList>
            <person name="Adam Z."/>
            <person name="Adamska I."/>
            <person name="Nakabayashi K."/>
            <person name="Ostersetzer O."/>
            <person name="Haussuhl K."/>
            <person name="Manuell A."/>
            <person name="Zheng B."/>
            <person name="Vallon O."/>
            <person name="Rodermel S.R."/>
            <person name="Shinozaki K."/>
            <person name="Clarke A.K."/>
        </authorList>
    </citation>
    <scope>GENE FAMILY</scope>
    <scope>NOMENCLATURE</scope>
</reference>
<reference key="9">
    <citation type="journal article" date="2004" name="J. Biol. Chem.">
        <title>Clp protease complexes from photosynthetic and non-photosynthetic plastids and mitochondria of plants, their predicted three-dimensional structures, and functional implications.</title>
        <authorList>
            <person name="Peltier J.-B."/>
            <person name="Ripoll D.R."/>
            <person name="Friso G."/>
            <person name="Rudella A."/>
            <person name="Cai Y."/>
            <person name="Ytterberg J."/>
            <person name="Giacomelli L."/>
            <person name="Pillardy J."/>
            <person name="van Wijk K.J."/>
        </authorList>
    </citation>
    <scope>IDENTIFICATION BY MASS SPECTROMETRY</scope>
    <scope>SUBUNIT</scope>
    <scope>SUBCELLULAR LOCATION</scope>
    <scope>3D-STRUCTURE MODELING</scope>
</reference>
<reference key="10">
    <citation type="journal article" date="2005" name="Physiol. Plantarum">
        <title>The ATP-dependent Clp protease in chloroplasts of higher plants.</title>
        <authorList>
            <person name="Clarke A.K."/>
            <person name="MacDonald T.M."/>
            <person name="Sjoegren L.L."/>
        </authorList>
    </citation>
    <scope>NOMENCLATURE</scope>
</reference>
<reference key="11">
    <citation type="journal article" date="2006" name="Plant Cell">
        <title>Downregulation of ClpR2 leads to reduced accumulation of the ClpPRS protease complex and defects in chloroplast biogenesis in Arabidopsis.</title>
        <authorList>
            <person name="Rudella A."/>
            <person name="Friso G."/>
            <person name="Alonso J.M."/>
            <person name="Ecker J.R."/>
            <person name="van Wijk K.J."/>
        </authorList>
    </citation>
    <scope>IDENTIFICATION BY MASS SPECTROMETRY</scope>
    <scope>SUBUNIT</scope>
</reference>
<reference key="12">
    <citation type="journal article" date="2006" name="Plant Cell">
        <title>Structural and functional insights into the chloroplast ATP-dependent Clp protease in Arabidopsis.</title>
        <authorList>
            <person name="Sjoegren L.L.E."/>
            <person name="Stanne T.M."/>
            <person name="Zheng B."/>
            <person name="Sutinen S."/>
            <person name="Clarke A.K."/>
        </authorList>
    </citation>
    <scope>SUBUNIT</scope>
</reference>
<reference key="13">
    <citation type="journal article" date="2009" name="Plant Cell">
        <title>Subunits of the plastid ClpPR protease complex have differential contributions to embryogenesis, plastid biogenesis, and plant development in Arabidopsis.</title>
        <authorList>
            <person name="Kim J."/>
            <person name="Rudella A."/>
            <person name="Ramirez Rodriguez V."/>
            <person name="Zybailov B."/>
            <person name="Olinares P.D."/>
            <person name="van Wijk K.J."/>
        </authorList>
    </citation>
    <scope>DISRUPTION PHENOTYPE</scope>
</reference>
<reference key="14">
    <citation type="journal article" date="2011" name="Plant Cell">
        <title>Subunit stoichiometry, evolution, and functional implications of an asymmetric plant plastid ClpP/R protease complex in Arabidopsis.</title>
        <authorList>
            <person name="Olinares P.D."/>
            <person name="Kim J."/>
            <person name="Davis J.I."/>
            <person name="van Wijk K.J."/>
        </authorList>
    </citation>
    <scope>IDENTIFICATION BY MASS SPECTROMETRY</scope>
    <scope>SUBUNIT</scope>
</reference>
<reference key="15">
    <citation type="journal article" date="2012" name="Mol. Cell. Proteomics">
        <title>Comparative large-scale characterisation of plant vs. mammal proteins reveals similar and idiosyncratic N-alpha acetylation features.</title>
        <authorList>
            <person name="Bienvenut W.V."/>
            <person name="Sumpton D."/>
            <person name="Martinez A."/>
            <person name="Lilla S."/>
            <person name="Espagne C."/>
            <person name="Meinnel T."/>
            <person name="Giglione C."/>
        </authorList>
    </citation>
    <scope>ACETYLATION [LARGE SCALE ANALYSIS] AT GLY-101</scope>
    <scope>CLEAVAGE OF TRANSIT PEPTIDE [LARGE SCALE ANALYSIS] AFTER GLN-100</scope>
    <scope>IDENTIFICATION BY MASS SPECTROMETRY [LARGE SCALE ANALYSIS]</scope>
</reference>
<reference key="16">
    <citation type="journal article" date="2012" name="Physiol. Plantarum">
        <title>The chloroplast ATP-dependent Clp protease in vascular plants - new dimensions and future challenges.</title>
        <authorList>
            <person name="Clarke A.K."/>
        </authorList>
    </citation>
    <scope>REVIEW</scope>
</reference>
<reference key="17">
    <citation type="journal article" date="2015" name="J. Exp. Bot.">
        <title>The E3 ligase AtCHIP positively regulates Clp proteolytic subunit homeostasis.</title>
        <authorList>
            <person name="Wei J."/>
            <person name="Qiu X."/>
            <person name="Chen L."/>
            <person name="Hu W."/>
            <person name="Hu R."/>
            <person name="Chen J."/>
            <person name="Sun L."/>
            <person name="Li L."/>
            <person name="Zhang H."/>
            <person name="Lv Z."/>
            <person name="Shen G."/>
        </authorList>
    </citation>
    <scope>INTERACTION WITH CHIP</scope>
    <scope>UBIQUITINATION</scope>
</reference>
<feature type="transit peptide" description="Chloroplast" evidence="16">
    <location>
        <begin position="1"/>
        <end position="100"/>
    </location>
</feature>
<feature type="chain" id="PRO_0000308980" description="ATP-dependent Clp protease proteolytic subunit 5, chloroplastic">
    <location>
        <begin position="101"/>
        <end position="298"/>
    </location>
</feature>
<feature type="active site" description="Nucleophile" evidence="1">
    <location>
        <position position="193"/>
    </location>
</feature>
<feature type="active site" evidence="1">
    <location>
        <position position="218"/>
    </location>
</feature>
<feature type="modified residue" description="N-acetylglycine" evidence="16">
    <location>
        <position position="101"/>
    </location>
</feature>
<feature type="sequence conflict" description="In Ref. 7; AA sequence." evidence="13" ref="7">
    <original>I</original>
    <variation>II</variation>
    <location>
        <position position="115"/>
    </location>
</feature>
<feature type="sequence conflict" description="In Ref. 7; AA sequence." evidence="13" ref="7">
    <original>N</original>
    <variation>D</variation>
    <location>
        <position position="246"/>
    </location>
</feature>
<feature type="sequence conflict" description="In Ref. 7; AA sequence." evidence="13" ref="7">
    <location>
        <position position="253"/>
    </location>
</feature>
<feature type="sequence conflict" description="In Ref. 7; AA sequence." evidence="13" ref="7">
    <location>
        <position position="267"/>
    </location>
</feature>
<feature type="sequence conflict" description="In Ref. 7; AA sequence." evidence="13" ref="7">
    <original>L</original>
    <variation>I</variation>
    <location>
        <position position="280"/>
    </location>
</feature>
<feature type="sequence conflict" description="In Ref. 7; AA sequence." evidence="13" ref="7">
    <original>I</original>
    <variation>L</variation>
    <location>
        <position position="285"/>
    </location>
</feature>
<comment type="function">
    <text evidence="1">Cleaves peptides in various proteins in a process that requires ATP hydrolysis. Has a chymotrypsin-like activity. Plays a major role in the degradation of misfolded proteins (By similarity).</text>
</comment>
<comment type="catalytic activity">
    <reaction>
        <text>Hydrolysis of proteins to small peptides in the presence of ATP and magnesium. alpha-casein is the usual test substrate. In the absence of ATP, only oligopeptides shorter than five residues are hydrolyzed (such as succinyl-Leu-Tyr-|-NHMec, and Leu-Tyr-Leu-|-Tyr-Trp, in which cleavage of the -Tyr-|-Leu- and -Tyr-|-Trp bonds also occurs).</text>
        <dbReference type="EC" id="3.4.21.92"/>
    </reaction>
</comment>
<comment type="subunit">
    <text evidence="3 5 6 7 9 11">Component of the chloroplastic Clp protease core complex which consist of at least 16 proteins: CLPP4 (3 copies), CLPP5 (3 copies), CLPR4 (2 copies), ClpP1 (1 copy), CLPP6 (1 copy), CLPR2 (1 copy), CLPT1 (1 copy), CLPT2 (1 copy) and 3 copies of CLPP3 and/or CLPR1 and/or CLPR3 (PubMed:11278690, PubMed:14593120, PubMed:16766689, PubMed:16980539). The core complex is organized in two heptameric rings, one containing CLPP3,4,5,6 in a 1:2:3:1 ratio and the other CLPP1 and CLPR1,2,3,4 in a 3:1:1:1:1 ratio (PubMed:21712416). Interacts with CHIP (PubMed:26085677).</text>
</comment>
<comment type="subcellular location">
    <subcellularLocation>
        <location evidence="4 5">Plastid</location>
        <location evidence="4 5">Chloroplast stroma</location>
    </subcellularLocation>
</comment>
<comment type="tissue specificity">
    <text evidence="4">Mostly expressed in leaves. Also detected in stems, and to a lower extent, in roots (at protein level).</text>
</comment>
<comment type="induction">
    <text evidence="2 4">Repressed in darkness. Induced by high light stress and during cold acclimation (at protein level).</text>
</comment>
<comment type="PTM">
    <text evidence="10">Ubiquitinated in vitro by CHIP.</text>
</comment>
<comment type="disruption phenotype">
    <text evidence="8">Embryo lethal.</text>
</comment>
<comment type="similarity">
    <text evidence="13">Belongs to the peptidase S14 family.</text>
</comment>
<proteinExistence type="evidence at protein level"/>
<dbReference type="EC" id="3.4.21.92"/>
<dbReference type="EMBL" id="AB022326">
    <property type="protein sequence ID" value="BAA82065.1"/>
    <property type="molecule type" value="mRNA"/>
</dbReference>
<dbReference type="EMBL" id="AJ012278">
    <property type="protein sequence ID" value="CAB43488.1"/>
    <property type="molecule type" value="mRNA"/>
</dbReference>
<dbReference type="EMBL" id="AC022521">
    <property type="protein sequence ID" value="AAG10637.1"/>
    <property type="molecule type" value="Genomic_DNA"/>
</dbReference>
<dbReference type="EMBL" id="CP002684">
    <property type="protein sequence ID" value="AEE27444.1"/>
    <property type="molecule type" value="Genomic_DNA"/>
</dbReference>
<dbReference type="EMBL" id="BT024859">
    <property type="protein sequence ID" value="ABD65590.1"/>
    <property type="molecule type" value="mRNA"/>
</dbReference>
<dbReference type="EMBL" id="AY084394">
    <property type="protein sequence ID" value="AAM60971.1"/>
    <property type="molecule type" value="mRNA"/>
</dbReference>
<dbReference type="PIR" id="T52455">
    <property type="entry name" value="T52455"/>
</dbReference>
<dbReference type="RefSeq" id="NP_563657.1">
    <property type="nucleotide sequence ID" value="NM_100137.4"/>
</dbReference>
<dbReference type="SMR" id="Q9S834"/>
<dbReference type="BioGRID" id="24668">
    <property type="interactions" value="13"/>
</dbReference>
<dbReference type="FunCoup" id="Q9S834">
    <property type="interactions" value="1131"/>
</dbReference>
<dbReference type="IntAct" id="Q9S834">
    <property type="interactions" value="1"/>
</dbReference>
<dbReference type="STRING" id="3702.Q9S834"/>
<dbReference type="MEROPS" id="S14.A01"/>
<dbReference type="iPTMnet" id="Q9S834"/>
<dbReference type="PaxDb" id="3702-AT1G02560.1"/>
<dbReference type="ProteomicsDB" id="246591"/>
<dbReference type="EnsemblPlants" id="AT1G02560.1">
    <property type="protein sequence ID" value="AT1G02560.1"/>
    <property type="gene ID" value="AT1G02560"/>
</dbReference>
<dbReference type="GeneID" id="839433"/>
<dbReference type="Gramene" id="AT1G02560.1">
    <property type="protein sequence ID" value="AT1G02560.1"/>
    <property type="gene ID" value="AT1G02560"/>
</dbReference>
<dbReference type="KEGG" id="ath:AT1G02560"/>
<dbReference type="Araport" id="AT1G02560"/>
<dbReference type="TAIR" id="AT1G02560">
    <property type="gene designation" value="CLPP5"/>
</dbReference>
<dbReference type="eggNOG" id="KOG0840">
    <property type="taxonomic scope" value="Eukaryota"/>
</dbReference>
<dbReference type="HOGENOM" id="CLU_058707_2_1_1"/>
<dbReference type="InParanoid" id="Q9S834"/>
<dbReference type="OMA" id="FFMSPKE"/>
<dbReference type="OrthoDB" id="2017408at2759"/>
<dbReference type="PhylomeDB" id="Q9S834"/>
<dbReference type="CD-CODE" id="4299E36E">
    <property type="entry name" value="Nucleolus"/>
</dbReference>
<dbReference type="PRO" id="PR:Q9S834"/>
<dbReference type="Proteomes" id="UP000006548">
    <property type="component" value="Chromosome 1"/>
</dbReference>
<dbReference type="ExpressionAtlas" id="Q9S834">
    <property type="expression patterns" value="baseline and differential"/>
</dbReference>
<dbReference type="GO" id="GO:0009507">
    <property type="term" value="C:chloroplast"/>
    <property type="evidence" value="ECO:0007005"/>
    <property type="project" value="TAIR"/>
</dbReference>
<dbReference type="GO" id="GO:0009941">
    <property type="term" value="C:chloroplast envelope"/>
    <property type="evidence" value="ECO:0007005"/>
    <property type="project" value="TAIR"/>
</dbReference>
<dbReference type="GO" id="GO:0009570">
    <property type="term" value="C:chloroplast stroma"/>
    <property type="evidence" value="ECO:0007005"/>
    <property type="project" value="TAIR"/>
</dbReference>
<dbReference type="GO" id="GO:0009534">
    <property type="term" value="C:chloroplast thylakoid"/>
    <property type="evidence" value="ECO:0000314"/>
    <property type="project" value="TAIR"/>
</dbReference>
<dbReference type="GO" id="GO:0009840">
    <property type="term" value="C:chloroplastic endopeptidase Clp complex"/>
    <property type="evidence" value="ECO:0000314"/>
    <property type="project" value="TAIR"/>
</dbReference>
<dbReference type="GO" id="GO:0005576">
    <property type="term" value="C:extracellular region"/>
    <property type="evidence" value="ECO:0007005"/>
    <property type="project" value="TAIR"/>
</dbReference>
<dbReference type="GO" id="GO:0009532">
    <property type="term" value="C:plastid stroma"/>
    <property type="evidence" value="ECO:0000314"/>
    <property type="project" value="TAIR"/>
</dbReference>
<dbReference type="GO" id="GO:0009579">
    <property type="term" value="C:thylakoid"/>
    <property type="evidence" value="ECO:0007005"/>
    <property type="project" value="TAIR"/>
</dbReference>
<dbReference type="GO" id="GO:0004176">
    <property type="term" value="F:ATP-dependent peptidase activity"/>
    <property type="evidence" value="ECO:0007669"/>
    <property type="project" value="InterPro"/>
</dbReference>
<dbReference type="GO" id="GO:0004252">
    <property type="term" value="F:serine-type endopeptidase activity"/>
    <property type="evidence" value="ECO:0007669"/>
    <property type="project" value="UniProtKB-EC"/>
</dbReference>
<dbReference type="GO" id="GO:0006508">
    <property type="term" value="P:proteolysis"/>
    <property type="evidence" value="ECO:0007669"/>
    <property type="project" value="UniProtKB-KW"/>
</dbReference>
<dbReference type="CDD" id="cd07017">
    <property type="entry name" value="S14_ClpP_2"/>
    <property type="match status" value="1"/>
</dbReference>
<dbReference type="FunFam" id="3.90.226.10:FF:000014">
    <property type="entry name" value="ATP-dependent Clp protease proteolytic subunit"/>
    <property type="match status" value="1"/>
</dbReference>
<dbReference type="Gene3D" id="3.90.226.10">
    <property type="entry name" value="2-enoyl-CoA Hydratase, Chain A, domain 1"/>
    <property type="match status" value="1"/>
</dbReference>
<dbReference type="HAMAP" id="MF_00444">
    <property type="entry name" value="ClpP"/>
    <property type="match status" value="1"/>
</dbReference>
<dbReference type="InterPro" id="IPR001907">
    <property type="entry name" value="ClpP"/>
</dbReference>
<dbReference type="InterPro" id="IPR029045">
    <property type="entry name" value="ClpP/crotonase-like_dom_sf"/>
</dbReference>
<dbReference type="InterPro" id="IPR023562">
    <property type="entry name" value="ClpP/TepA"/>
</dbReference>
<dbReference type="InterPro" id="IPR033135">
    <property type="entry name" value="ClpP_His_AS"/>
</dbReference>
<dbReference type="InterPro" id="IPR018215">
    <property type="entry name" value="ClpP_Ser_AS"/>
</dbReference>
<dbReference type="NCBIfam" id="NF001368">
    <property type="entry name" value="PRK00277.1"/>
    <property type="match status" value="1"/>
</dbReference>
<dbReference type="NCBIfam" id="NF009205">
    <property type="entry name" value="PRK12553.1"/>
    <property type="match status" value="1"/>
</dbReference>
<dbReference type="PANTHER" id="PTHR10381">
    <property type="entry name" value="ATP-DEPENDENT CLP PROTEASE PROTEOLYTIC SUBUNIT"/>
    <property type="match status" value="1"/>
</dbReference>
<dbReference type="PANTHER" id="PTHR10381:SF12">
    <property type="entry name" value="ATP-DEPENDENT CLP PROTEASE PROTEOLYTIC SUBUNIT 5, CHLOROPLASTIC"/>
    <property type="match status" value="1"/>
</dbReference>
<dbReference type="Pfam" id="PF00574">
    <property type="entry name" value="CLP_protease"/>
    <property type="match status" value="1"/>
</dbReference>
<dbReference type="PRINTS" id="PR00127">
    <property type="entry name" value="CLPPROTEASEP"/>
</dbReference>
<dbReference type="SUPFAM" id="SSF52096">
    <property type="entry name" value="ClpP/crotonase"/>
    <property type="match status" value="1"/>
</dbReference>
<dbReference type="PROSITE" id="PS00382">
    <property type="entry name" value="CLP_PROTEASE_HIS"/>
    <property type="match status" value="1"/>
</dbReference>
<dbReference type="PROSITE" id="PS00381">
    <property type="entry name" value="CLP_PROTEASE_SER"/>
    <property type="match status" value="1"/>
</dbReference>